<reference key="1">
    <citation type="journal article" date="2004" name="Nucleic Acids Res.">
        <title>Genome sequence of Symbiobacterium thermophilum, an uncultivable bacterium that depends on microbial commensalism.</title>
        <authorList>
            <person name="Ueda K."/>
            <person name="Yamashita A."/>
            <person name="Ishikawa J."/>
            <person name="Shimada M."/>
            <person name="Watsuji T."/>
            <person name="Morimura K."/>
            <person name="Ikeda H."/>
            <person name="Hattori M."/>
            <person name="Beppu T."/>
        </authorList>
    </citation>
    <scope>NUCLEOTIDE SEQUENCE [LARGE SCALE GENOMIC DNA]</scope>
    <source>
        <strain>DSM 24528 / JCM 14929 / IAM 14863 / T</strain>
    </source>
</reference>
<keyword id="KW-0067">ATP-binding</keyword>
<keyword id="KW-0520">NAD</keyword>
<keyword id="KW-0547">Nucleotide-binding</keyword>
<keyword id="KW-0548">Nucleotidyltransferase</keyword>
<keyword id="KW-0662">Pyridine nucleotide biosynthesis</keyword>
<keyword id="KW-1185">Reference proteome</keyword>
<keyword id="KW-0808">Transferase</keyword>
<name>NADD_SYMTH</name>
<protein>
    <recommendedName>
        <fullName evidence="1">Probable nicotinate-nucleotide adenylyltransferase</fullName>
        <ecNumber evidence="1">2.7.7.18</ecNumber>
    </recommendedName>
    <alternativeName>
        <fullName evidence="1">Deamido-NAD(+) diphosphorylase</fullName>
    </alternativeName>
    <alternativeName>
        <fullName evidence="1">Deamido-NAD(+) pyrophosphorylase</fullName>
    </alternativeName>
    <alternativeName>
        <fullName evidence="1">Nicotinate mononucleotide adenylyltransferase</fullName>
        <shortName evidence="1">NaMN adenylyltransferase</shortName>
    </alternativeName>
</protein>
<sequence length="208" mass="22845">MARVAVLGGTFDPIHLGHLAAAQGVLHLTGVERVIFLPNRQPPHKQGQPVTPAEHRAAMVRLAIADNPAFGFSDLELRRPGPSYTIETVRALAAEHPDWEPAFIIGLDSLLAIRTWREWETLMQSVDFFAVTRPGHDLAAARRLLAELGPRLSGRVRLLEIPGVAVASADLRRLAAAGYPLRYLVPDPVARYIAEHRLYLRGESHGDG</sequence>
<organism>
    <name type="scientific">Symbiobacterium thermophilum (strain DSM 24528 / JCM 14929 / IAM 14863 / T)</name>
    <dbReference type="NCBI Taxonomy" id="292459"/>
    <lineage>
        <taxon>Bacteria</taxon>
        <taxon>Bacillati</taxon>
        <taxon>Bacillota</taxon>
        <taxon>Clostridia</taxon>
        <taxon>Eubacteriales</taxon>
        <taxon>Symbiobacteriaceae</taxon>
        <taxon>Symbiobacterium</taxon>
    </lineage>
</organism>
<evidence type="ECO:0000255" key="1">
    <source>
        <dbReference type="HAMAP-Rule" id="MF_00244"/>
    </source>
</evidence>
<proteinExistence type="inferred from homology"/>
<dbReference type="EC" id="2.7.7.18" evidence="1"/>
<dbReference type="EMBL" id="AP006840">
    <property type="protein sequence ID" value="BAD39419.1"/>
    <property type="molecule type" value="Genomic_DNA"/>
</dbReference>
<dbReference type="RefSeq" id="WP_011194568.1">
    <property type="nucleotide sequence ID" value="NC_006177.1"/>
</dbReference>
<dbReference type="SMR" id="Q67SC4"/>
<dbReference type="STRING" id="292459.STH434"/>
<dbReference type="KEGG" id="sth:STH434"/>
<dbReference type="eggNOG" id="COG1057">
    <property type="taxonomic scope" value="Bacteria"/>
</dbReference>
<dbReference type="HOGENOM" id="CLU_069765_1_0_9"/>
<dbReference type="OrthoDB" id="5295945at2"/>
<dbReference type="UniPathway" id="UPA00253">
    <property type="reaction ID" value="UER00332"/>
</dbReference>
<dbReference type="Proteomes" id="UP000000417">
    <property type="component" value="Chromosome"/>
</dbReference>
<dbReference type="GO" id="GO:0005524">
    <property type="term" value="F:ATP binding"/>
    <property type="evidence" value="ECO:0007669"/>
    <property type="project" value="UniProtKB-KW"/>
</dbReference>
<dbReference type="GO" id="GO:0004515">
    <property type="term" value="F:nicotinate-nucleotide adenylyltransferase activity"/>
    <property type="evidence" value="ECO:0007669"/>
    <property type="project" value="UniProtKB-UniRule"/>
</dbReference>
<dbReference type="GO" id="GO:0009435">
    <property type="term" value="P:NAD biosynthetic process"/>
    <property type="evidence" value="ECO:0007669"/>
    <property type="project" value="UniProtKB-UniRule"/>
</dbReference>
<dbReference type="CDD" id="cd02165">
    <property type="entry name" value="NMNAT"/>
    <property type="match status" value="1"/>
</dbReference>
<dbReference type="Gene3D" id="3.40.50.620">
    <property type="entry name" value="HUPs"/>
    <property type="match status" value="1"/>
</dbReference>
<dbReference type="HAMAP" id="MF_00244">
    <property type="entry name" value="NaMN_adenylyltr"/>
    <property type="match status" value="1"/>
</dbReference>
<dbReference type="InterPro" id="IPR004821">
    <property type="entry name" value="Cyt_trans-like"/>
</dbReference>
<dbReference type="InterPro" id="IPR005248">
    <property type="entry name" value="NadD/NMNAT"/>
</dbReference>
<dbReference type="InterPro" id="IPR014729">
    <property type="entry name" value="Rossmann-like_a/b/a_fold"/>
</dbReference>
<dbReference type="NCBIfam" id="TIGR00125">
    <property type="entry name" value="cyt_tran_rel"/>
    <property type="match status" value="1"/>
</dbReference>
<dbReference type="NCBIfam" id="TIGR00482">
    <property type="entry name" value="nicotinate (nicotinamide) nucleotide adenylyltransferase"/>
    <property type="match status" value="1"/>
</dbReference>
<dbReference type="NCBIfam" id="NF000840">
    <property type="entry name" value="PRK00071.1-3"/>
    <property type="match status" value="1"/>
</dbReference>
<dbReference type="PANTHER" id="PTHR39321">
    <property type="entry name" value="NICOTINATE-NUCLEOTIDE ADENYLYLTRANSFERASE-RELATED"/>
    <property type="match status" value="1"/>
</dbReference>
<dbReference type="PANTHER" id="PTHR39321:SF3">
    <property type="entry name" value="PHOSPHOPANTETHEINE ADENYLYLTRANSFERASE"/>
    <property type="match status" value="1"/>
</dbReference>
<dbReference type="Pfam" id="PF01467">
    <property type="entry name" value="CTP_transf_like"/>
    <property type="match status" value="1"/>
</dbReference>
<dbReference type="SUPFAM" id="SSF52374">
    <property type="entry name" value="Nucleotidylyl transferase"/>
    <property type="match status" value="1"/>
</dbReference>
<accession>Q67SC4</accession>
<comment type="function">
    <text evidence="1">Catalyzes the reversible adenylation of nicotinate mononucleotide (NaMN) to nicotinic acid adenine dinucleotide (NaAD).</text>
</comment>
<comment type="catalytic activity">
    <reaction evidence="1">
        <text>nicotinate beta-D-ribonucleotide + ATP + H(+) = deamido-NAD(+) + diphosphate</text>
        <dbReference type="Rhea" id="RHEA:22860"/>
        <dbReference type="ChEBI" id="CHEBI:15378"/>
        <dbReference type="ChEBI" id="CHEBI:30616"/>
        <dbReference type="ChEBI" id="CHEBI:33019"/>
        <dbReference type="ChEBI" id="CHEBI:57502"/>
        <dbReference type="ChEBI" id="CHEBI:58437"/>
        <dbReference type="EC" id="2.7.7.18"/>
    </reaction>
</comment>
<comment type="pathway">
    <text evidence="1">Cofactor biosynthesis; NAD(+) biosynthesis; deamido-NAD(+) from nicotinate D-ribonucleotide: step 1/1.</text>
</comment>
<comment type="similarity">
    <text evidence="1">Belongs to the NadD family.</text>
</comment>
<feature type="chain" id="PRO_0000310154" description="Probable nicotinate-nucleotide adenylyltransferase">
    <location>
        <begin position="1"/>
        <end position="208"/>
    </location>
</feature>
<gene>
    <name evidence="1" type="primary">nadD</name>
    <name type="ordered locus">STH434</name>
</gene>